<feature type="chain" id="PRO_1000020097" description="Methionyl-tRNA formyltransferase">
    <location>
        <begin position="1"/>
        <end position="308"/>
    </location>
</feature>
<feature type="binding site" evidence="1">
    <location>
        <begin position="109"/>
        <end position="112"/>
    </location>
    <ligand>
        <name>(6S)-5,6,7,8-tetrahydrofolate</name>
        <dbReference type="ChEBI" id="CHEBI:57453"/>
    </ligand>
</feature>
<accession>Q1H4Y0</accession>
<reference key="1">
    <citation type="submission" date="2006-03" db="EMBL/GenBank/DDBJ databases">
        <title>Complete sequence of Methylobacillus flagellatus KT.</title>
        <authorList>
            <consortium name="US DOE Joint Genome Institute"/>
            <person name="Copeland A."/>
            <person name="Lucas S."/>
            <person name="Lapidus A."/>
            <person name="Barry K."/>
            <person name="Detter J.C."/>
            <person name="Glavina del Rio T."/>
            <person name="Hammon N."/>
            <person name="Israni S."/>
            <person name="Dalin E."/>
            <person name="Tice H."/>
            <person name="Pitluck S."/>
            <person name="Brettin T."/>
            <person name="Bruce D."/>
            <person name="Han C."/>
            <person name="Tapia R."/>
            <person name="Saunders E."/>
            <person name="Gilna P."/>
            <person name="Schmutz J."/>
            <person name="Larimer F."/>
            <person name="Land M."/>
            <person name="Kyrpides N."/>
            <person name="Anderson I."/>
            <person name="Richardson P."/>
        </authorList>
    </citation>
    <scope>NUCLEOTIDE SEQUENCE [LARGE SCALE GENOMIC DNA]</scope>
    <source>
        <strain>ATCC 51484 / DSM 6875 / VKM B-1610 / KT</strain>
    </source>
</reference>
<sequence length="308" mass="33120">MKIIYAGTPDFAVPALRALIQSSHEVSLVLTQPDRPAGRGLKLKPSPVKSLALEHGIPLLQPETLKDEAVQARIAAEHADALVVAAYGLIIPATVLSMPRYGCYNIHASLLPRWRGAAPIQRALLAGDKETGVTIMEVVPALDAGAMILRGTLPITEHDTAQTLHDGLAEIGAELMLQAMDKLEREGRLEAEPQDESLVTYAQKLQKAEAVIDWRKNADELSRQVRAFNPFPVAHSTLKGETCRIWMAQAVSGTAEPGMIASVDNGILVGCGRGLLRIDELQLPGGKRLQAKDFLAGNPLCPGDRFGS</sequence>
<keyword id="KW-0648">Protein biosynthesis</keyword>
<keyword id="KW-1185">Reference proteome</keyword>
<keyword id="KW-0808">Transferase</keyword>
<gene>
    <name evidence="1" type="primary">fmt</name>
    <name type="ordered locus">Mfla_0186</name>
</gene>
<protein>
    <recommendedName>
        <fullName evidence="1">Methionyl-tRNA formyltransferase</fullName>
        <ecNumber evidence="1">2.1.2.9</ecNumber>
    </recommendedName>
</protein>
<evidence type="ECO:0000255" key="1">
    <source>
        <dbReference type="HAMAP-Rule" id="MF_00182"/>
    </source>
</evidence>
<dbReference type="EC" id="2.1.2.9" evidence="1"/>
<dbReference type="EMBL" id="CP000284">
    <property type="protein sequence ID" value="ABE48457.1"/>
    <property type="molecule type" value="Genomic_DNA"/>
</dbReference>
<dbReference type="RefSeq" id="WP_011478554.1">
    <property type="nucleotide sequence ID" value="NC_007947.1"/>
</dbReference>
<dbReference type="SMR" id="Q1H4Y0"/>
<dbReference type="STRING" id="265072.Mfla_0186"/>
<dbReference type="KEGG" id="mfa:Mfla_0186"/>
<dbReference type="eggNOG" id="COG0223">
    <property type="taxonomic scope" value="Bacteria"/>
</dbReference>
<dbReference type="HOGENOM" id="CLU_033347_1_2_4"/>
<dbReference type="OrthoDB" id="9802815at2"/>
<dbReference type="Proteomes" id="UP000002440">
    <property type="component" value="Chromosome"/>
</dbReference>
<dbReference type="GO" id="GO:0005829">
    <property type="term" value="C:cytosol"/>
    <property type="evidence" value="ECO:0007669"/>
    <property type="project" value="TreeGrafter"/>
</dbReference>
<dbReference type="GO" id="GO:0004479">
    <property type="term" value="F:methionyl-tRNA formyltransferase activity"/>
    <property type="evidence" value="ECO:0007669"/>
    <property type="project" value="UniProtKB-UniRule"/>
</dbReference>
<dbReference type="CDD" id="cd08646">
    <property type="entry name" value="FMT_core_Met-tRNA-FMT_N"/>
    <property type="match status" value="1"/>
</dbReference>
<dbReference type="CDD" id="cd08704">
    <property type="entry name" value="Met_tRNA_FMT_C"/>
    <property type="match status" value="1"/>
</dbReference>
<dbReference type="Gene3D" id="3.10.25.10">
    <property type="entry name" value="Formyl transferase, C-terminal domain"/>
    <property type="match status" value="1"/>
</dbReference>
<dbReference type="Gene3D" id="3.40.50.170">
    <property type="entry name" value="Formyl transferase, N-terminal domain"/>
    <property type="match status" value="1"/>
</dbReference>
<dbReference type="HAMAP" id="MF_00182">
    <property type="entry name" value="Formyl_trans"/>
    <property type="match status" value="1"/>
</dbReference>
<dbReference type="InterPro" id="IPR005794">
    <property type="entry name" value="Fmt"/>
</dbReference>
<dbReference type="InterPro" id="IPR005793">
    <property type="entry name" value="Formyl_trans_C"/>
</dbReference>
<dbReference type="InterPro" id="IPR037022">
    <property type="entry name" value="Formyl_trans_C_sf"/>
</dbReference>
<dbReference type="InterPro" id="IPR002376">
    <property type="entry name" value="Formyl_transf_N"/>
</dbReference>
<dbReference type="InterPro" id="IPR036477">
    <property type="entry name" value="Formyl_transf_N_sf"/>
</dbReference>
<dbReference type="InterPro" id="IPR011034">
    <property type="entry name" value="Formyl_transferase-like_C_sf"/>
</dbReference>
<dbReference type="InterPro" id="IPR044135">
    <property type="entry name" value="Met-tRNA-FMT_C"/>
</dbReference>
<dbReference type="InterPro" id="IPR041711">
    <property type="entry name" value="Met-tRNA-FMT_N"/>
</dbReference>
<dbReference type="NCBIfam" id="TIGR00460">
    <property type="entry name" value="fmt"/>
    <property type="match status" value="1"/>
</dbReference>
<dbReference type="PANTHER" id="PTHR11138">
    <property type="entry name" value="METHIONYL-TRNA FORMYLTRANSFERASE"/>
    <property type="match status" value="1"/>
</dbReference>
<dbReference type="PANTHER" id="PTHR11138:SF5">
    <property type="entry name" value="METHIONYL-TRNA FORMYLTRANSFERASE, MITOCHONDRIAL"/>
    <property type="match status" value="1"/>
</dbReference>
<dbReference type="Pfam" id="PF02911">
    <property type="entry name" value="Formyl_trans_C"/>
    <property type="match status" value="1"/>
</dbReference>
<dbReference type="Pfam" id="PF00551">
    <property type="entry name" value="Formyl_trans_N"/>
    <property type="match status" value="1"/>
</dbReference>
<dbReference type="SUPFAM" id="SSF50486">
    <property type="entry name" value="FMT C-terminal domain-like"/>
    <property type="match status" value="1"/>
</dbReference>
<dbReference type="SUPFAM" id="SSF53328">
    <property type="entry name" value="Formyltransferase"/>
    <property type="match status" value="1"/>
</dbReference>
<comment type="function">
    <text evidence="1">Attaches a formyl group to the free amino group of methionyl-tRNA(fMet). The formyl group appears to play a dual role in the initiator identity of N-formylmethionyl-tRNA by promoting its recognition by IF2 and preventing the misappropriation of this tRNA by the elongation apparatus.</text>
</comment>
<comment type="catalytic activity">
    <reaction evidence="1">
        <text>L-methionyl-tRNA(fMet) + (6R)-10-formyltetrahydrofolate = N-formyl-L-methionyl-tRNA(fMet) + (6S)-5,6,7,8-tetrahydrofolate + H(+)</text>
        <dbReference type="Rhea" id="RHEA:24380"/>
        <dbReference type="Rhea" id="RHEA-COMP:9952"/>
        <dbReference type="Rhea" id="RHEA-COMP:9953"/>
        <dbReference type="ChEBI" id="CHEBI:15378"/>
        <dbReference type="ChEBI" id="CHEBI:57453"/>
        <dbReference type="ChEBI" id="CHEBI:78530"/>
        <dbReference type="ChEBI" id="CHEBI:78844"/>
        <dbReference type="ChEBI" id="CHEBI:195366"/>
        <dbReference type="EC" id="2.1.2.9"/>
    </reaction>
</comment>
<comment type="similarity">
    <text evidence="1">Belongs to the Fmt family.</text>
</comment>
<organism>
    <name type="scientific">Methylobacillus flagellatus (strain ATCC 51484 / DSM 6875 / VKM B-1610 / KT)</name>
    <dbReference type="NCBI Taxonomy" id="265072"/>
    <lineage>
        <taxon>Bacteria</taxon>
        <taxon>Pseudomonadati</taxon>
        <taxon>Pseudomonadota</taxon>
        <taxon>Betaproteobacteria</taxon>
        <taxon>Nitrosomonadales</taxon>
        <taxon>Methylophilaceae</taxon>
        <taxon>Methylobacillus</taxon>
    </lineage>
</organism>
<proteinExistence type="inferred from homology"/>
<name>FMT_METFK</name>